<accession>P38066</accession>
<accession>D6VPW6</accession>
<name>RIB1_YEAST</name>
<feature type="chain" id="PRO_0000151786" description="GTP cyclohydrolase-2">
    <location>
        <begin position="1"/>
        <end position="345"/>
    </location>
</feature>
<feature type="region of interest" description="Disordered" evidence="3">
    <location>
        <begin position="1"/>
        <end position="27"/>
    </location>
</feature>
<feature type="region of interest" description="Disordered" evidence="3">
    <location>
        <begin position="312"/>
        <end position="345"/>
    </location>
</feature>
<feature type="compositionally biased region" description="Polar residues" evidence="3">
    <location>
        <begin position="317"/>
        <end position="345"/>
    </location>
</feature>
<feature type="active site" description="Proton acceptor" evidence="2">
    <location>
        <position position="231"/>
    </location>
</feature>
<feature type="active site" description="Nucleophile" evidence="1">
    <location>
        <position position="233"/>
    </location>
</feature>
<feature type="binding site" evidence="1">
    <location>
        <begin position="143"/>
        <end position="147"/>
    </location>
    <ligand>
        <name>GTP</name>
        <dbReference type="ChEBI" id="CHEBI:37565"/>
    </ligand>
</feature>
<feature type="binding site" evidence="1">
    <location>
        <position position="148"/>
    </location>
    <ligand>
        <name>Zn(2+)</name>
        <dbReference type="ChEBI" id="CHEBI:29105"/>
        <note>catalytic</note>
    </ligand>
</feature>
<feature type="binding site" evidence="1">
    <location>
        <position position="159"/>
    </location>
    <ligand>
        <name>Zn(2+)</name>
        <dbReference type="ChEBI" id="CHEBI:29105"/>
        <note>catalytic</note>
    </ligand>
</feature>
<feature type="binding site" evidence="1">
    <location>
        <position position="161"/>
    </location>
    <ligand>
        <name>Zn(2+)</name>
        <dbReference type="ChEBI" id="CHEBI:29105"/>
        <note>catalytic</note>
    </ligand>
</feature>
<feature type="binding site" evidence="1">
    <location>
        <position position="164"/>
    </location>
    <ligand>
        <name>GTP</name>
        <dbReference type="ChEBI" id="CHEBI:37565"/>
    </ligand>
</feature>
<feature type="binding site" evidence="1">
    <location>
        <begin position="197"/>
        <end position="199"/>
    </location>
    <ligand>
        <name>GTP</name>
        <dbReference type="ChEBI" id="CHEBI:37565"/>
    </ligand>
</feature>
<feature type="binding site" evidence="1">
    <location>
        <position position="219"/>
    </location>
    <ligand>
        <name>GTP</name>
        <dbReference type="ChEBI" id="CHEBI:37565"/>
    </ligand>
</feature>
<feature type="binding site" evidence="1">
    <location>
        <position position="254"/>
    </location>
    <ligand>
        <name>GTP</name>
        <dbReference type="ChEBI" id="CHEBI:37565"/>
    </ligand>
</feature>
<feature type="binding site" evidence="1">
    <location>
        <position position="259"/>
    </location>
    <ligand>
        <name>GTP</name>
        <dbReference type="ChEBI" id="CHEBI:37565"/>
    </ligand>
</feature>
<protein>
    <recommendedName>
        <fullName>GTP cyclohydrolase-2</fullName>
        <ecNumber>3.5.4.25</ecNumber>
    </recommendedName>
    <alternativeName>
        <fullName>GTP cyclohydrolase II</fullName>
    </alternativeName>
</protein>
<keyword id="KW-0342">GTP-binding</keyword>
<keyword id="KW-0378">Hydrolase</keyword>
<keyword id="KW-0479">Metal-binding</keyword>
<keyword id="KW-0547">Nucleotide-binding</keyword>
<keyword id="KW-1185">Reference proteome</keyword>
<keyword id="KW-0686">Riboflavin biosynthesis</keyword>
<keyword id="KW-0862">Zinc</keyword>
<gene>
    <name type="primary">RIB1</name>
    <name type="ordered locus">YBL033C</name>
    <name type="ORF">YBL0417</name>
</gene>
<dbReference type="EC" id="3.5.4.25"/>
<dbReference type="EMBL" id="Z35794">
    <property type="protein sequence ID" value="CAA84853.1"/>
    <property type="molecule type" value="Genomic_DNA"/>
</dbReference>
<dbReference type="EMBL" id="X74738">
    <property type="protein sequence ID" value="CAA52759.1"/>
    <property type="molecule type" value="Genomic_DNA"/>
</dbReference>
<dbReference type="EMBL" id="Z21617">
    <property type="protein sequence ID" value="CAA79741.1"/>
    <property type="molecule type" value="Genomic_DNA"/>
</dbReference>
<dbReference type="EMBL" id="BK006936">
    <property type="protein sequence ID" value="DAA07086.1"/>
    <property type="molecule type" value="Genomic_DNA"/>
</dbReference>
<dbReference type="PIR" id="S45767">
    <property type="entry name" value="S45767"/>
</dbReference>
<dbReference type="RefSeq" id="NP_009520.1">
    <property type="nucleotide sequence ID" value="NM_001178273.1"/>
</dbReference>
<dbReference type="SMR" id="P38066"/>
<dbReference type="BioGRID" id="32664">
    <property type="interactions" value="16"/>
</dbReference>
<dbReference type="DIP" id="DIP-3936N"/>
<dbReference type="FunCoup" id="P38066">
    <property type="interactions" value="195"/>
</dbReference>
<dbReference type="IntAct" id="P38066">
    <property type="interactions" value="6"/>
</dbReference>
<dbReference type="MINT" id="P38066"/>
<dbReference type="STRING" id="4932.YBL033C"/>
<dbReference type="GlyGen" id="P38066">
    <property type="glycosylation" value="2 sites, 1 O-linked glycan (2 sites)"/>
</dbReference>
<dbReference type="iPTMnet" id="P38066"/>
<dbReference type="PaxDb" id="4932-YBL033C"/>
<dbReference type="PeptideAtlas" id="P38066"/>
<dbReference type="EnsemblFungi" id="YBL033C_mRNA">
    <property type="protein sequence ID" value="YBL033C"/>
    <property type="gene ID" value="YBL033C"/>
</dbReference>
<dbReference type="GeneID" id="852247"/>
<dbReference type="KEGG" id="sce:YBL033C"/>
<dbReference type="AGR" id="SGD:S000000129"/>
<dbReference type="SGD" id="S000000129">
    <property type="gene designation" value="RIB1"/>
</dbReference>
<dbReference type="VEuPathDB" id="FungiDB:YBL033C"/>
<dbReference type="eggNOG" id="KOG1284">
    <property type="taxonomic scope" value="Eukaryota"/>
</dbReference>
<dbReference type="GeneTree" id="ENSGT00940000176677"/>
<dbReference type="HOGENOM" id="CLU_020273_2_4_1"/>
<dbReference type="InParanoid" id="P38066"/>
<dbReference type="OMA" id="RLPNVEC"/>
<dbReference type="OrthoDB" id="5569761at2759"/>
<dbReference type="BioCyc" id="MetaCyc:YBL033C-MONOMER"/>
<dbReference type="BioCyc" id="YEAST:YBL033C-MONOMER"/>
<dbReference type="UniPathway" id="UPA00275">
    <property type="reaction ID" value="UER00400"/>
</dbReference>
<dbReference type="BioGRID-ORCS" id="852247">
    <property type="hits" value="9 hits in 10 CRISPR screens"/>
</dbReference>
<dbReference type="PRO" id="PR:P38066"/>
<dbReference type="Proteomes" id="UP000002311">
    <property type="component" value="Chromosome II"/>
</dbReference>
<dbReference type="RNAct" id="P38066">
    <property type="molecule type" value="protein"/>
</dbReference>
<dbReference type="GO" id="GO:0005737">
    <property type="term" value="C:cytoplasm"/>
    <property type="evidence" value="ECO:0007005"/>
    <property type="project" value="SGD"/>
</dbReference>
<dbReference type="GO" id="GO:0005634">
    <property type="term" value="C:nucleus"/>
    <property type="evidence" value="ECO:0007005"/>
    <property type="project" value="SGD"/>
</dbReference>
<dbReference type="GO" id="GO:0019238">
    <property type="term" value="F:cyclohydrolase activity"/>
    <property type="evidence" value="ECO:0000315"/>
    <property type="project" value="SGD"/>
</dbReference>
<dbReference type="GO" id="GO:0005525">
    <property type="term" value="F:GTP binding"/>
    <property type="evidence" value="ECO:0007669"/>
    <property type="project" value="UniProtKB-KW"/>
</dbReference>
<dbReference type="GO" id="GO:0003935">
    <property type="term" value="F:GTP cyclohydrolase II activity"/>
    <property type="evidence" value="ECO:0007669"/>
    <property type="project" value="UniProtKB-EC"/>
</dbReference>
<dbReference type="GO" id="GO:0046872">
    <property type="term" value="F:metal ion binding"/>
    <property type="evidence" value="ECO:0007669"/>
    <property type="project" value="UniProtKB-KW"/>
</dbReference>
<dbReference type="GO" id="GO:0009231">
    <property type="term" value="P:riboflavin biosynthetic process"/>
    <property type="evidence" value="ECO:0000315"/>
    <property type="project" value="SGD"/>
</dbReference>
<dbReference type="CDD" id="cd00641">
    <property type="entry name" value="GTP_cyclohydro2"/>
    <property type="match status" value="1"/>
</dbReference>
<dbReference type="Gene3D" id="3.40.50.10990">
    <property type="entry name" value="GTP cyclohydrolase II"/>
    <property type="match status" value="1"/>
</dbReference>
<dbReference type="InterPro" id="IPR032677">
    <property type="entry name" value="GTP_cyclohydro_II"/>
</dbReference>
<dbReference type="InterPro" id="IPR000926">
    <property type="entry name" value="RibA"/>
</dbReference>
<dbReference type="InterPro" id="IPR036144">
    <property type="entry name" value="RibA-like_sf"/>
</dbReference>
<dbReference type="NCBIfam" id="NF001591">
    <property type="entry name" value="PRK00393.1"/>
    <property type="match status" value="1"/>
</dbReference>
<dbReference type="NCBIfam" id="TIGR00505">
    <property type="entry name" value="ribA"/>
    <property type="match status" value="1"/>
</dbReference>
<dbReference type="PANTHER" id="PTHR21327">
    <property type="entry name" value="GTP CYCLOHYDROLASE II-RELATED"/>
    <property type="match status" value="1"/>
</dbReference>
<dbReference type="PANTHER" id="PTHR21327:SF29">
    <property type="entry name" value="GTP CYCLOHYDROLASE-2"/>
    <property type="match status" value="1"/>
</dbReference>
<dbReference type="Pfam" id="PF00925">
    <property type="entry name" value="GTP_cyclohydro2"/>
    <property type="match status" value="1"/>
</dbReference>
<dbReference type="SUPFAM" id="SSF142695">
    <property type="entry name" value="RibA-like"/>
    <property type="match status" value="2"/>
</dbReference>
<evidence type="ECO:0000250" key="1"/>
<evidence type="ECO:0000255" key="2"/>
<evidence type="ECO:0000256" key="3">
    <source>
        <dbReference type="SAM" id="MobiDB-lite"/>
    </source>
</evidence>
<evidence type="ECO:0000269" key="4">
    <source>
    </source>
</evidence>
<evidence type="ECO:0000305" key="5"/>
<proteinExistence type="evidence at protein level"/>
<sequence length="345" mass="38332">MTIDNYDNSKQDSSKYEVSGTGDGRNGDGGLPLVQCVARARIPTTQGPDIFLHLYSNNRDNKEHLAIVFGEDIRSRSLFRRRQCETQQDRMIRGAYIGKLYPGRTVADEDDRLGLALEFDDSTGELLASKATTWDAHNDTLVRIHSECYTGENAWSARCDCGEQFDRAGRLIACDHEPTSNIKGGNGHGVIVYLRQEGRGIGLGEKLKAYNLQDLGADTVQANLMLKHPVDARDFSLGKAILLDLGIGNVRLLTNNPEKIKQVDHAPYLKCVERVPMVPIHWTNSSEGIDSKEIEGYLRTKIERMGHLLTEPLKLHTNPQPTETSEAQNQNRMNSALSSTSTLAI</sequence>
<organism>
    <name type="scientific">Saccharomyces cerevisiae (strain ATCC 204508 / S288c)</name>
    <name type="common">Baker's yeast</name>
    <dbReference type="NCBI Taxonomy" id="559292"/>
    <lineage>
        <taxon>Eukaryota</taxon>
        <taxon>Fungi</taxon>
        <taxon>Dikarya</taxon>
        <taxon>Ascomycota</taxon>
        <taxon>Saccharomycotina</taxon>
        <taxon>Saccharomycetes</taxon>
        <taxon>Saccharomycetales</taxon>
        <taxon>Saccharomycetaceae</taxon>
        <taxon>Saccharomyces</taxon>
    </lineage>
</organism>
<comment type="function">
    <text evidence="1">Catalyzes the conversion of GTP to 2,5-diamino-6-ribosylamino-4(3H)-pyrimidinone 5'-phosphate (DARP), formate and pyrophosphate.</text>
</comment>
<comment type="catalytic activity">
    <reaction>
        <text>GTP + 4 H2O = 2,5-diamino-6-hydroxy-4-(5-phosphoribosylamino)-pyrimidine + formate + 2 phosphate + 3 H(+)</text>
        <dbReference type="Rhea" id="RHEA:23704"/>
        <dbReference type="ChEBI" id="CHEBI:15377"/>
        <dbReference type="ChEBI" id="CHEBI:15378"/>
        <dbReference type="ChEBI" id="CHEBI:15740"/>
        <dbReference type="ChEBI" id="CHEBI:37565"/>
        <dbReference type="ChEBI" id="CHEBI:43474"/>
        <dbReference type="ChEBI" id="CHEBI:58614"/>
        <dbReference type="EC" id="3.5.4.25"/>
    </reaction>
</comment>
<comment type="cofactor">
    <cofactor evidence="1">
        <name>Zn(2+)</name>
        <dbReference type="ChEBI" id="CHEBI:29105"/>
    </cofactor>
    <text evidence="1">Binds 1 zinc ion per subunit.</text>
</comment>
<comment type="pathway">
    <text>Cofactor biosynthesis; riboflavin biosynthesis; 5-amino-6-(D-ribitylamino)uracil from GTP: step 1/4.</text>
</comment>
<comment type="interaction">
    <interactant intactId="EBI-7436">
        <id>P38066</id>
    </interactant>
    <interactant intactId="EBI-32780">
        <id>Q06608</id>
        <label>YPR172W</label>
    </interactant>
    <organismsDiffer>false</organismsDiffer>
    <experiments>2</experiments>
</comment>
<comment type="miscellaneous">
    <text evidence="4">Present with 9520 molecules/cell in log phase SD medium.</text>
</comment>
<comment type="similarity">
    <text evidence="5">Belongs to the GTP cyclohydrolase II family.</text>
</comment>
<reference key="1">
    <citation type="journal article" date="1994" name="Yeast">
        <title>The sequence of an 8.8 kb segment on the left arm of chromosome II from Saccharomyces cerevisiae reveals four new open reading frames including homologs of animal DNA polymerase alpha-primases and bacterial GTP cyclohydrolase II.</title>
        <authorList>
            <person name="Skala J."/>
            <person name="van Dyck L."/>
            <person name="Purnelle B."/>
            <person name="Goffeau A."/>
        </authorList>
    </citation>
    <scope>NUCLEOTIDE SEQUENCE [GENOMIC DNA]</scope>
    <source>
        <strain>ATCC 204508 / S288c</strain>
    </source>
</reference>
<reference key="2">
    <citation type="submission" date="1998-03" db="EMBL/GenBank/DDBJ databases">
        <authorList>
            <person name="Skala J."/>
            <person name="van Dyck L."/>
            <person name="Purnelle B."/>
            <person name="Goffeau A."/>
        </authorList>
    </citation>
    <scope>SEQUENCE REVISION TO 181</scope>
</reference>
<reference key="3">
    <citation type="journal article" date="1994" name="EMBO J.">
        <title>Complete DNA sequence of yeast chromosome II.</title>
        <authorList>
            <person name="Feldmann H."/>
            <person name="Aigle M."/>
            <person name="Aljinovic G."/>
            <person name="Andre B."/>
            <person name="Baclet M.C."/>
            <person name="Barthe C."/>
            <person name="Baur A."/>
            <person name="Becam A.-M."/>
            <person name="Biteau N."/>
            <person name="Boles E."/>
            <person name="Brandt T."/>
            <person name="Brendel M."/>
            <person name="Brueckner M."/>
            <person name="Bussereau F."/>
            <person name="Christiansen C."/>
            <person name="Contreras R."/>
            <person name="Crouzet M."/>
            <person name="Cziepluch C."/>
            <person name="Demolis N."/>
            <person name="Delaveau T."/>
            <person name="Doignon F."/>
            <person name="Domdey H."/>
            <person name="Duesterhus S."/>
            <person name="Dubois E."/>
            <person name="Dujon B."/>
            <person name="El Bakkoury M."/>
            <person name="Entian K.-D."/>
            <person name="Feuermann M."/>
            <person name="Fiers W."/>
            <person name="Fobo G.M."/>
            <person name="Fritz C."/>
            <person name="Gassenhuber J."/>
            <person name="Glansdorff N."/>
            <person name="Goffeau A."/>
            <person name="Grivell L.A."/>
            <person name="de Haan M."/>
            <person name="Hein C."/>
            <person name="Herbert C.J."/>
            <person name="Hollenberg C.P."/>
            <person name="Holmstroem K."/>
            <person name="Jacq C."/>
            <person name="Jacquet M."/>
            <person name="Jauniaux J.-C."/>
            <person name="Jonniaux J.-L."/>
            <person name="Kallesoee T."/>
            <person name="Kiesau P."/>
            <person name="Kirchrath L."/>
            <person name="Koetter P."/>
            <person name="Korol S."/>
            <person name="Liebl S."/>
            <person name="Logghe M."/>
            <person name="Lohan A.J.E."/>
            <person name="Louis E.J."/>
            <person name="Li Z.Y."/>
            <person name="Maat M.J."/>
            <person name="Mallet L."/>
            <person name="Mannhaupt G."/>
            <person name="Messenguy F."/>
            <person name="Miosga T."/>
            <person name="Molemans F."/>
            <person name="Mueller S."/>
            <person name="Nasr F."/>
            <person name="Obermaier B."/>
            <person name="Perea J."/>
            <person name="Pierard A."/>
            <person name="Piravandi E."/>
            <person name="Pohl F.M."/>
            <person name="Pohl T.M."/>
            <person name="Potier S."/>
            <person name="Proft M."/>
            <person name="Purnelle B."/>
            <person name="Ramezani Rad M."/>
            <person name="Rieger M."/>
            <person name="Rose M."/>
            <person name="Schaaff-Gerstenschlaeger I."/>
            <person name="Scherens B."/>
            <person name="Schwarzlose C."/>
            <person name="Skala J."/>
            <person name="Slonimski P.P."/>
            <person name="Smits P.H.M."/>
            <person name="Souciet J.-L."/>
            <person name="Steensma H.Y."/>
            <person name="Stucka R."/>
            <person name="Urrestarazu L.A."/>
            <person name="van der Aart Q.J.M."/>
            <person name="Van Dyck L."/>
            <person name="Vassarotti A."/>
            <person name="Vetter I."/>
            <person name="Vierendeels F."/>
            <person name="Vissers S."/>
            <person name="Wagner G."/>
            <person name="de Wergifosse P."/>
            <person name="Wolfe K.H."/>
            <person name="Zagulski M."/>
            <person name="Zimmermann F.K."/>
            <person name="Mewes H.-W."/>
            <person name="Kleine K."/>
        </authorList>
    </citation>
    <scope>NUCLEOTIDE SEQUENCE [LARGE SCALE GENOMIC DNA]</scope>
    <source>
        <strain>ATCC 204508 / S288c</strain>
    </source>
</reference>
<reference key="4">
    <citation type="journal article" date="2014" name="G3 (Bethesda)">
        <title>The reference genome sequence of Saccharomyces cerevisiae: Then and now.</title>
        <authorList>
            <person name="Engel S.R."/>
            <person name="Dietrich F.S."/>
            <person name="Fisk D.G."/>
            <person name="Binkley G."/>
            <person name="Balakrishnan R."/>
            <person name="Costanzo M.C."/>
            <person name="Dwight S.S."/>
            <person name="Hitz B.C."/>
            <person name="Karra K."/>
            <person name="Nash R.S."/>
            <person name="Weng S."/>
            <person name="Wong E.D."/>
            <person name="Lloyd P."/>
            <person name="Skrzypek M.S."/>
            <person name="Miyasato S.R."/>
            <person name="Simison M."/>
            <person name="Cherry J.M."/>
        </authorList>
    </citation>
    <scope>GENOME REANNOTATION</scope>
    <source>
        <strain>ATCC 204508 / S288c</strain>
    </source>
</reference>
<reference key="5">
    <citation type="journal article" date="2003" name="Nature">
        <title>Global analysis of protein expression in yeast.</title>
        <authorList>
            <person name="Ghaemmaghami S."/>
            <person name="Huh W.-K."/>
            <person name="Bower K."/>
            <person name="Howson R.W."/>
            <person name="Belle A."/>
            <person name="Dephoure N."/>
            <person name="O'Shea E.K."/>
            <person name="Weissman J.S."/>
        </authorList>
    </citation>
    <scope>LEVEL OF PROTEIN EXPRESSION [LARGE SCALE ANALYSIS]</scope>
</reference>